<reference key="1">
    <citation type="journal article" date="1997" name="Cell Motil. Cytoskeleton">
        <title>Vertebrates have conserved capping protein alpha isoforms with specific expression patterns.</title>
        <authorList>
            <person name="Hart M.C."/>
            <person name="Korshunova Y.O."/>
            <person name="Cooper J.A."/>
        </authorList>
    </citation>
    <scope>NUCLEOTIDE SEQUENCE [MRNA]</scope>
    <source>
        <tissue>Placenta</tissue>
    </source>
</reference>
<reference key="2">
    <citation type="submission" date="2004-06" db="EMBL/GenBank/DDBJ databases">
        <title>Cloning of human full open reading frames in Gateway(TM) system entry vector (pDONR201).</title>
        <authorList>
            <person name="Halleck A."/>
            <person name="Ebert L."/>
            <person name="Mkoundinya M."/>
            <person name="Schick M."/>
            <person name="Eisenstein S."/>
            <person name="Neubert P."/>
            <person name="Kstrang K."/>
            <person name="Schatten R."/>
            <person name="Shen B."/>
            <person name="Henze S."/>
            <person name="Mar W."/>
            <person name="Korn B."/>
            <person name="Zuo D."/>
            <person name="Hu Y."/>
            <person name="LaBaer J."/>
        </authorList>
    </citation>
    <scope>NUCLEOTIDE SEQUENCE [LARGE SCALE MRNA]</scope>
</reference>
<reference key="3">
    <citation type="submission" date="2004-10" db="EMBL/GenBank/DDBJ databases">
        <title>Cloning of human full-length CDSs in BD Creator(TM) system donor vector.</title>
        <authorList>
            <person name="Kalnine N."/>
            <person name="Chen X."/>
            <person name="Rolfs A."/>
            <person name="Halleck A."/>
            <person name="Hines L."/>
            <person name="Eisenstein S."/>
            <person name="Koundinya M."/>
            <person name="Raphael J."/>
            <person name="Moreira D."/>
            <person name="Kelley T."/>
            <person name="LaBaer J."/>
            <person name="Lin Y."/>
            <person name="Phelan M."/>
            <person name="Farmer A."/>
        </authorList>
    </citation>
    <scope>NUCLEOTIDE SEQUENCE [LARGE SCALE MRNA]</scope>
</reference>
<reference key="4">
    <citation type="submission" date="2005-04" db="EMBL/GenBank/DDBJ databases">
        <authorList>
            <person name="Suzuki Y."/>
            <person name="Sugano S."/>
            <person name="Totoki Y."/>
            <person name="Toyoda A."/>
            <person name="Takeda T."/>
            <person name="Sakaki Y."/>
            <person name="Tanaka A."/>
            <person name="Yokoyama S."/>
        </authorList>
    </citation>
    <scope>NUCLEOTIDE SEQUENCE [LARGE SCALE MRNA]</scope>
    <source>
        <tissue>Gastric mucosa</tissue>
    </source>
</reference>
<reference key="5">
    <citation type="journal article" date="2006" name="Nature">
        <title>The DNA sequence and biological annotation of human chromosome 1.</title>
        <authorList>
            <person name="Gregory S.G."/>
            <person name="Barlow K.F."/>
            <person name="McLay K.E."/>
            <person name="Kaul R."/>
            <person name="Swarbreck D."/>
            <person name="Dunham A."/>
            <person name="Scott C.E."/>
            <person name="Howe K.L."/>
            <person name="Woodfine K."/>
            <person name="Spencer C.C.A."/>
            <person name="Jones M.C."/>
            <person name="Gillson C."/>
            <person name="Searle S."/>
            <person name="Zhou Y."/>
            <person name="Kokocinski F."/>
            <person name="McDonald L."/>
            <person name="Evans R."/>
            <person name="Phillips K."/>
            <person name="Atkinson A."/>
            <person name="Cooper R."/>
            <person name="Jones C."/>
            <person name="Hall R.E."/>
            <person name="Andrews T.D."/>
            <person name="Lloyd C."/>
            <person name="Ainscough R."/>
            <person name="Almeida J.P."/>
            <person name="Ambrose K.D."/>
            <person name="Anderson F."/>
            <person name="Andrew R.W."/>
            <person name="Ashwell R.I.S."/>
            <person name="Aubin K."/>
            <person name="Babbage A.K."/>
            <person name="Bagguley C.L."/>
            <person name="Bailey J."/>
            <person name="Beasley H."/>
            <person name="Bethel G."/>
            <person name="Bird C.P."/>
            <person name="Bray-Allen S."/>
            <person name="Brown J.Y."/>
            <person name="Brown A.J."/>
            <person name="Buckley D."/>
            <person name="Burton J."/>
            <person name="Bye J."/>
            <person name="Carder C."/>
            <person name="Chapman J.C."/>
            <person name="Clark S.Y."/>
            <person name="Clarke G."/>
            <person name="Clee C."/>
            <person name="Cobley V."/>
            <person name="Collier R.E."/>
            <person name="Corby N."/>
            <person name="Coville G.J."/>
            <person name="Davies J."/>
            <person name="Deadman R."/>
            <person name="Dunn M."/>
            <person name="Earthrowl M."/>
            <person name="Ellington A.G."/>
            <person name="Errington H."/>
            <person name="Frankish A."/>
            <person name="Frankland J."/>
            <person name="French L."/>
            <person name="Garner P."/>
            <person name="Garnett J."/>
            <person name="Gay L."/>
            <person name="Ghori M.R.J."/>
            <person name="Gibson R."/>
            <person name="Gilby L.M."/>
            <person name="Gillett W."/>
            <person name="Glithero R.J."/>
            <person name="Grafham D.V."/>
            <person name="Griffiths C."/>
            <person name="Griffiths-Jones S."/>
            <person name="Grocock R."/>
            <person name="Hammond S."/>
            <person name="Harrison E.S.I."/>
            <person name="Hart E."/>
            <person name="Haugen E."/>
            <person name="Heath P.D."/>
            <person name="Holmes S."/>
            <person name="Holt K."/>
            <person name="Howden P.J."/>
            <person name="Hunt A.R."/>
            <person name="Hunt S.E."/>
            <person name="Hunter G."/>
            <person name="Isherwood J."/>
            <person name="James R."/>
            <person name="Johnson C."/>
            <person name="Johnson D."/>
            <person name="Joy A."/>
            <person name="Kay M."/>
            <person name="Kershaw J.K."/>
            <person name="Kibukawa M."/>
            <person name="Kimberley A.M."/>
            <person name="King A."/>
            <person name="Knights A.J."/>
            <person name="Lad H."/>
            <person name="Laird G."/>
            <person name="Lawlor S."/>
            <person name="Leongamornlert D.A."/>
            <person name="Lloyd D.M."/>
            <person name="Loveland J."/>
            <person name="Lovell J."/>
            <person name="Lush M.J."/>
            <person name="Lyne R."/>
            <person name="Martin S."/>
            <person name="Mashreghi-Mohammadi M."/>
            <person name="Matthews L."/>
            <person name="Matthews N.S.W."/>
            <person name="McLaren S."/>
            <person name="Milne S."/>
            <person name="Mistry S."/>
            <person name="Moore M.J.F."/>
            <person name="Nickerson T."/>
            <person name="O'Dell C.N."/>
            <person name="Oliver K."/>
            <person name="Palmeiri A."/>
            <person name="Palmer S.A."/>
            <person name="Parker A."/>
            <person name="Patel D."/>
            <person name="Pearce A.V."/>
            <person name="Peck A.I."/>
            <person name="Pelan S."/>
            <person name="Phelps K."/>
            <person name="Phillimore B.J."/>
            <person name="Plumb R."/>
            <person name="Rajan J."/>
            <person name="Raymond C."/>
            <person name="Rouse G."/>
            <person name="Saenphimmachak C."/>
            <person name="Sehra H.K."/>
            <person name="Sheridan E."/>
            <person name="Shownkeen R."/>
            <person name="Sims S."/>
            <person name="Skuce C.D."/>
            <person name="Smith M."/>
            <person name="Steward C."/>
            <person name="Subramanian S."/>
            <person name="Sycamore N."/>
            <person name="Tracey A."/>
            <person name="Tromans A."/>
            <person name="Van Helmond Z."/>
            <person name="Wall M."/>
            <person name="Wallis J.M."/>
            <person name="White S."/>
            <person name="Whitehead S.L."/>
            <person name="Wilkinson J.E."/>
            <person name="Willey D.L."/>
            <person name="Williams H."/>
            <person name="Wilming L."/>
            <person name="Wray P.W."/>
            <person name="Wu Z."/>
            <person name="Coulson A."/>
            <person name="Vaudin M."/>
            <person name="Sulston J.E."/>
            <person name="Durbin R.M."/>
            <person name="Hubbard T."/>
            <person name="Wooster R."/>
            <person name="Dunham I."/>
            <person name="Carter N.P."/>
            <person name="McVean G."/>
            <person name="Ross M.T."/>
            <person name="Harrow J."/>
            <person name="Olson M.V."/>
            <person name="Beck S."/>
            <person name="Rogers J."/>
            <person name="Bentley D.R."/>
        </authorList>
    </citation>
    <scope>NUCLEOTIDE SEQUENCE [LARGE SCALE GENOMIC DNA]</scope>
</reference>
<reference key="6">
    <citation type="journal article" date="2004" name="Genome Res.">
        <title>The status, quality, and expansion of the NIH full-length cDNA project: the Mammalian Gene Collection (MGC).</title>
        <authorList>
            <consortium name="The MGC Project Team"/>
        </authorList>
    </citation>
    <scope>NUCLEOTIDE SEQUENCE [LARGE SCALE MRNA]</scope>
    <source>
        <tissue>Cervix</tissue>
    </source>
</reference>
<reference key="7">
    <citation type="submission" date="2006-05" db="UniProtKB">
        <authorList>
            <person name="Bienvenut W.V."/>
            <person name="Kanor S."/>
            <person name="Tissot J.-D."/>
            <person name="Quadroni M."/>
        </authorList>
    </citation>
    <scope>PROTEIN SEQUENCE OF 2-12 AND 178-192</scope>
    <scope>CLEAVAGE OF INITIATOR METHIONINE</scope>
    <scope>ACETYLATION AT ALA-2</scope>
    <scope>IDENTIFICATION BY MASS SPECTROMETRY</scope>
    <source>
        <tissue>T-cell</tissue>
    </source>
</reference>
<reference key="8">
    <citation type="journal article" date="2009" name="Anal. Chem.">
        <title>Lys-N and trypsin cover complementary parts of the phosphoproteome in a refined SCX-based approach.</title>
        <authorList>
            <person name="Gauci S."/>
            <person name="Helbig A.O."/>
            <person name="Slijper M."/>
            <person name="Krijgsveld J."/>
            <person name="Heck A.J."/>
            <person name="Mohammed S."/>
        </authorList>
    </citation>
    <scope>ACETYLATION [LARGE SCALE ANALYSIS] AT ALA-2</scope>
    <scope>CLEAVAGE OF INITIATOR METHIONINE [LARGE SCALE ANALYSIS]</scope>
    <scope>IDENTIFICATION BY MASS SPECTROMETRY [LARGE SCALE ANALYSIS]</scope>
</reference>
<reference key="9">
    <citation type="journal article" date="2009" name="Dev. Cell">
        <title>The Arp2/3 activator WASH controls the fission of endosomes through a large multiprotein complex.</title>
        <authorList>
            <person name="Derivery E."/>
            <person name="Sousa C."/>
            <person name="Gautier J.J."/>
            <person name="Lombard B."/>
            <person name="Loew D."/>
            <person name="Gautreau A."/>
        </authorList>
    </citation>
    <scope>IDENTIFICATION IN THE WASH COMPLEX</scope>
</reference>
<reference key="10">
    <citation type="journal article" date="2009" name="Science">
        <title>Lysine acetylation targets protein complexes and co-regulates major cellular functions.</title>
        <authorList>
            <person name="Choudhary C."/>
            <person name="Kumar C."/>
            <person name="Gnad F."/>
            <person name="Nielsen M.L."/>
            <person name="Rehman M."/>
            <person name="Walther T.C."/>
            <person name="Olsen J.V."/>
            <person name="Mann M."/>
        </authorList>
    </citation>
    <scope>ACETYLATION [LARGE SCALE ANALYSIS] AT LYS-19 AND LYS-97</scope>
    <scope>IDENTIFICATION BY MASS SPECTROMETRY [LARGE SCALE ANALYSIS]</scope>
</reference>
<reference key="11">
    <citation type="journal article" date="2011" name="BMC Syst. Biol.">
        <title>Initial characterization of the human central proteome.</title>
        <authorList>
            <person name="Burkard T.R."/>
            <person name="Planyavsky M."/>
            <person name="Kaupe I."/>
            <person name="Breitwieser F.P."/>
            <person name="Buerckstuemmer T."/>
            <person name="Bennett K.L."/>
            <person name="Superti-Furga G."/>
            <person name="Colinge J."/>
        </authorList>
    </citation>
    <scope>IDENTIFICATION BY MASS SPECTROMETRY [LARGE SCALE ANALYSIS]</scope>
</reference>
<reference key="12">
    <citation type="journal article" date="2012" name="J. Cell Biol.">
        <title>Epithelial junction formation requires confinement of Cdc42 activity by a novel SH3BP1 complex.</title>
        <authorList>
            <person name="Elbediwy A."/>
            <person name="Zihni C."/>
            <person name="Terry S.J."/>
            <person name="Clark P."/>
            <person name="Matter K."/>
            <person name="Balda M.S."/>
        </authorList>
    </citation>
    <scope>FUNCTION</scope>
    <scope>INTERACTION WITH CD2AP AND SH3BP1</scope>
</reference>
<reference key="13">
    <citation type="journal article" date="2013" name="J. Proteome Res.">
        <title>Toward a comprehensive characterization of a human cancer cell phosphoproteome.</title>
        <authorList>
            <person name="Zhou H."/>
            <person name="Di Palma S."/>
            <person name="Preisinger C."/>
            <person name="Peng M."/>
            <person name="Polat A.N."/>
            <person name="Heck A.J."/>
            <person name="Mohammed S."/>
        </authorList>
    </citation>
    <scope>PHOSPHORYLATION [LARGE SCALE ANALYSIS] AT SER-9</scope>
    <scope>IDENTIFICATION BY MASS SPECTROMETRY [LARGE SCALE ANALYSIS]</scope>
    <source>
        <tissue>Cervix carcinoma</tissue>
        <tissue>Erythroleukemia</tissue>
    </source>
</reference>
<reference key="14">
    <citation type="journal article" date="2014" name="J. Proteomics">
        <title>An enzyme assisted RP-RPLC approach for in-depth analysis of human liver phosphoproteome.</title>
        <authorList>
            <person name="Bian Y."/>
            <person name="Song C."/>
            <person name="Cheng K."/>
            <person name="Dong M."/>
            <person name="Wang F."/>
            <person name="Huang J."/>
            <person name="Sun D."/>
            <person name="Wang L."/>
            <person name="Ye M."/>
            <person name="Zou H."/>
        </authorList>
    </citation>
    <scope>IDENTIFICATION BY MASS SPECTROMETRY [LARGE SCALE ANALYSIS]</scope>
    <source>
        <tissue>Liver</tissue>
    </source>
</reference>
<reference key="15">
    <citation type="journal article" date="2015" name="Proteomics">
        <title>N-terminome analysis of the human mitochondrial proteome.</title>
        <authorList>
            <person name="Vaca Jacome A.S."/>
            <person name="Rabilloud T."/>
            <person name="Schaeffer-Reiss C."/>
            <person name="Rompais M."/>
            <person name="Ayoub D."/>
            <person name="Lane L."/>
            <person name="Bairoch A."/>
            <person name="Van Dorsselaer A."/>
            <person name="Carapito C."/>
        </authorList>
    </citation>
    <scope>IDENTIFICATION BY MASS SPECTROMETRY [LARGE SCALE ANALYSIS]</scope>
</reference>
<reference key="16">
    <citation type="journal article" date="2018" name="Nat. Cell Biol.">
        <title>Deregulation of CRAD-controlled cytoskeleton initiates mucinous colorectal cancer via beta-catenin.</title>
        <authorList>
            <person name="Jung Y.S."/>
            <person name="Wang W."/>
            <person name="Jun S."/>
            <person name="Zhang J."/>
            <person name="Srivastava M."/>
            <person name="Kim M.J."/>
            <person name="Lien E.M."/>
            <person name="Shang J."/>
            <person name="Chen J."/>
            <person name="McCrea P.D."/>
            <person name="Zhang S."/>
            <person name="Park J.I."/>
        </authorList>
    </citation>
    <scope>INTERACTION WITH CRACD</scope>
</reference>
<reference key="17">
    <citation type="journal article" date="2014" name="Hum. Mol. Genet.">
        <title>A missense mutation in the PISA domain of HsSAS-6 causes autosomal recessive primary microcephaly in a large consanguineous Pakistani family.</title>
        <authorList>
            <person name="Khan M.A."/>
            <person name="Rupp V.M."/>
            <person name="Orpinell M."/>
            <person name="Hussain M.S."/>
            <person name="Altmueller J."/>
            <person name="Steinmetz M.O."/>
            <person name="Enzinger C."/>
            <person name="Thiele H."/>
            <person name="Hoehne W."/>
            <person name="Nuernberg G."/>
            <person name="Baig S.M."/>
            <person name="Ansar M."/>
            <person name="Nuernberg P."/>
            <person name="Vincent J.B."/>
            <person name="Speicher M.R."/>
            <person name="Goenczy P."/>
            <person name="Windpassinger C."/>
        </authorList>
    </citation>
    <scope>VARIANT LEU-219</scope>
</reference>
<reference key="18">
    <citation type="journal article" date="2002" name="J. Mol. Biol.">
        <title>Solution NMR structure of S100B bound to the high-affinity target peptide TRTK-12.</title>
        <authorList>
            <person name="Inman K.G."/>
            <person name="Yang R."/>
            <person name="Rustandi R.R."/>
            <person name="Miller K.E."/>
            <person name="Baldisseri D.M."/>
            <person name="Weber D.J."/>
        </authorList>
    </citation>
    <scope>STRUCTURE BY NMR OF 265-276 IN COMPLEX WITH S100B AND CALCIUM</scope>
</reference>
<reference key="19">
    <citation type="journal article" date="2003" name="J. Biol. Chem.">
        <title>A novel S100 target conformation is revealed by the solution structure of the Ca2+-S100B-TRTK-12 complex.</title>
        <authorList>
            <person name="McClintock K.A."/>
            <person name="Shaw G.S."/>
        </authorList>
    </citation>
    <scope>STRUCTURE BY NMR OF 265-276 IN COMPLEX WITH S100B AND CALCIUM</scope>
</reference>
<gene>
    <name evidence="11" type="primary">CAPZA1</name>
</gene>
<dbReference type="EMBL" id="U56637">
    <property type="protein sequence ID" value="AAC00533.1"/>
    <property type="molecule type" value="mRNA"/>
</dbReference>
<dbReference type="EMBL" id="CR407657">
    <property type="protein sequence ID" value="CAG28585.1"/>
    <property type="molecule type" value="mRNA"/>
</dbReference>
<dbReference type="EMBL" id="CR541819">
    <property type="protein sequence ID" value="CAG46618.1"/>
    <property type="molecule type" value="mRNA"/>
</dbReference>
<dbReference type="EMBL" id="BT019364">
    <property type="protein sequence ID" value="AAV38171.1"/>
    <property type="molecule type" value="mRNA"/>
</dbReference>
<dbReference type="EMBL" id="AK223226">
    <property type="protein sequence ID" value="BAD96946.1"/>
    <property type="molecule type" value="mRNA"/>
</dbReference>
<dbReference type="EMBL" id="AL603832">
    <property type="status" value="NOT_ANNOTATED_CDS"/>
    <property type="molecule type" value="Genomic_DNA"/>
</dbReference>
<dbReference type="EMBL" id="AL929470">
    <property type="status" value="NOT_ANNOTATED_CDS"/>
    <property type="molecule type" value="Genomic_DNA"/>
</dbReference>
<dbReference type="EMBL" id="BC000144">
    <property type="protein sequence ID" value="AAH00144.1"/>
    <property type="molecule type" value="mRNA"/>
</dbReference>
<dbReference type="CCDS" id="CCDS30805.1"/>
<dbReference type="PIR" id="G02639">
    <property type="entry name" value="G02639"/>
</dbReference>
<dbReference type="RefSeq" id="NP_006126.1">
    <property type="nucleotide sequence ID" value="NM_006135.3"/>
</dbReference>
<dbReference type="PDB" id="1MQ1">
    <property type="method" value="NMR"/>
    <property type="chains" value="C/D=265-276"/>
</dbReference>
<dbReference type="PDB" id="1MWN">
    <property type="method" value="NMR"/>
    <property type="chains" value="X/Y=265-276"/>
</dbReference>
<dbReference type="PDB" id="7T5Q">
    <property type="method" value="EM"/>
    <property type="resolution" value="3.40 A"/>
    <property type="chains" value="I=1-280"/>
</dbReference>
<dbReference type="PDB" id="8F8Q">
    <property type="method" value="EM"/>
    <property type="resolution" value="2.79 A"/>
    <property type="chains" value="G=1-286"/>
</dbReference>
<dbReference type="PDBsum" id="1MQ1"/>
<dbReference type="PDBsum" id="1MWN"/>
<dbReference type="PDBsum" id="7T5Q"/>
<dbReference type="PDBsum" id="8F8Q"/>
<dbReference type="EMDB" id="EMD-28933"/>
<dbReference type="SMR" id="P52907"/>
<dbReference type="BioGRID" id="107279">
    <property type="interactions" value="395"/>
</dbReference>
<dbReference type="ComplexPortal" id="CPX-8695">
    <property type="entry name" value="F-actin capping protein complex, CAPZA1 variant"/>
</dbReference>
<dbReference type="CORUM" id="P52907"/>
<dbReference type="FunCoup" id="P52907">
    <property type="interactions" value="3087"/>
</dbReference>
<dbReference type="IntAct" id="P52907">
    <property type="interactions" value="172"/>
</dbReference>
<dbReference type="MINT" id="P52907"/>
<dbReference type="STRING" id="9606.ENSP00000263168"/>
<dbReference type="ChEMBL" id="CHEMBL4295781"/>
<dbReference type="GlyCosmos" id="P52907">
    <property type="glycosylation" value="1 site, 1 glycan"/>
</dbReference>
<dbReference type="GlyGen" id="P52907">
    <property type="glycosylation" value="1 site, 1 O-linked glycan (1 site)"/>
</dbReference>
<dbReference type="iPTMnet" id="P52907"/>
<dbReference type="MetOSite" id="P52907"/>
<dbReference type="PhosphoSitePlus" id="P52907"/>
<dbReference type="SwissPalm" id="P52907"/>
<dbReference type="BioMuta" id="CAPZA1"/>
<dbReference type="OGP" id="P52907"/>
<dbReference type="REPRODUCTION-2DPAGE" id="IPI00005969"/>
<dbReference type="REPRODUCTION-2DPAGE" id="P52907"/>
<dbReference type="jPOST" id="P52907"/>
<dbReference type="MassIVE" id="P52907"/>
<dbReference type="PaxDb" id="9606-ENSP00000263168"/>
<dbReference type="PeptideAtlas" id="P52907"/>
<dbReference type="PRIDE" id="P52907"/>
<dbReference type="ProteomicsDB" id="56550"/>
<dbReference type="Pumba" id="P52907"/>
<dbReference type="TopDownProteomics" id="P52907"/>
<dbReference type="Antibodypedia" id="33824">
    <property type="antibodies" value="312 antibodies from 31 providers"/>
</dbReference>
<dbReference type="DNASU" id="829"/>
<dbReference type="Ensembl" id="ENST00000263168.4">
    <property type="protein sequence ID" value="ENSP00000263168.3"/>
    <property type="gene ID" value="ENSG00000116489.13"/>
</dbReference>
<dbReference type="GeneID" id="829"/>
<dbReference type="KEGG" id="hsa:829"/>
<dbReference type="MANE-Select" id="ENST00000263168.4">
    <property type="protein sequence ID" value="ENSP00000263168.3"/>
    <property type="RefSeq nucleotide sequence ID" value="NM_006135.3"/>
    <property type="RefSeq protein sequence ID" value="NP_006126.1"/>
</dbReference>
<dbReference type="UCSC" id="uc001ecj.2">
    <property type="organism name" value="human"/>
</dbReference>
<dbReference type="AGR" id="HGNC:1488"/>
<dbReference type="CTD" id="829"/>
<dbReference type="DisGeNET" id="829"/>
<dbReference type="GeneCards" id="CAPZA1"/>
<dbReference type="HGNC" id="HGNC:1488">
    <property type="gene designation" value="CAPZA1"/>
</dbReference>
<dbReference type="HPA" id="ENSG00000116489">
    <property type="expression patterns" value="Low tissue specificity"/>
</dbReference>
<dbReference type="MIM" id="601580">
    <property type="type" value="gene"/>
</dbReference>
<dbReference type="neXtProt" id="NX_P52907"/>
<dbReference type="OpenTargets" id="ENSG00000116489"/>
<dbReference type="PharmGKB" id="PA26069"/>
<dbReference type="VEuPathDB" id="HostDB:ENSG00000116489"/>
<dbReference type="eggNOG" id="KOG0836">
    <property type="taxonomic scope" value="Eukaryota"/>
</dbReference>
<dbReference type="GeneTree" id="ENSGT00950000183119"/>
<dbReference type="HOGENOM" id="CLU_045161_0_0_1"/>
<dbReference type="InParanoid" id="P52907"/>
<dbReference type="OMA" id="QEHFPNA"/>
<dbReference type="OrthoDB" id="340550at2759"/>
<dbReference type="PAN-GO" id="P52907">
    <property type="GO annotations" value="5 GO annotations based on evolutionary models"/>
</dbReference>
<dbReference type="PhylomeDB" id="P52907"/>
<dbReference type="TreeFam" id="TF314822"/>
<dbReference type="PathwayCommons" id="P52907"/>
<dbReference type="Reactome" id="R-HSA-2132295">
    <property type="pathway name" value="MHC class II antigen presentation"/>
</dbReference>
<dbReference type="Reactome" id="R-HSA-3371497">
    <property type="pathway name" value="HSP90 chaperone cycle for steroid hormone receptors (SHR) in the presence of ligand"/>
</dbReference>
<dbReference type="Reactome" id="R-HSA-6807878">
    <property type="pathway name" value="COPI-mediated anterograde transport"/>
</dbReference>
<dbReference type="Reactome" id="R-HSA-6811436">
    <property type="pathway name" value="COPI-independent Golgi-to-ER retrograde traffic"/>
</dbReference>
<dbReference type="Reactome" id="R-HSA-879415">
    <property type="pathway name" value="Advanced glycosylation endproduct receptor signaling"/>
</dbReference>
<dbReference type="Reactome" id="R-HSA-8950505">
    <property type="pathway name" value="Gene and protein expression by JAK-STAT signaling after Interleukin-12 stimulation"/>
</dbReference>
<dbReference type="Reactome" id="R-HSA-9662360">
    <property type="pathway name" value="Sensory processing of sound by inner hair cells of the cochlea"/>
</dbReference>
<dbReference type="Reactome" id="R-HSA-983231">
    <property type="pathway name" value="Factors involved in megakaryocyte development and platelet production"/>
</dbReference>
<dbReference type="SignaLink" id="P52907"/>
<dbReference type="SIGNOR" id="P52907"/>
<dbReference type="BioGRID-ORCS" id="829">
    <property type="hits" value="19 hits in 1166 CRISPR screens"/>
</dbReference>
<dbReference type="CD-CODE" id="FB4E32DD">
    <property type="entry name" value="Presynaptic clusters and postsynaptic densities"/>
</dbReference>
<dbReference type="ChiTaRS" id="CAPZA1">
    <property type="organism name" value="human"/>
</dbReference>
<dbReference type="EvolutionaryTrace" id="P52907"/>
<dbReference type="GenomeRNAi" id="829"/>
<dbReference type="Pharos" id="P52907">
    <property type="development level" value="Tbio"/>
</dbReference>
<dbReference type="PRO" id="PR:P52907"/>
<dbReference type="Proteomes" id="UP000005640">
    <property type="component" value="Chromosome 1"/>
</dbReference>
<dbReference type="RNAct" id="P52907">
    <property type="molecule type" value="protein"/>
</dbReference>
<dbReference type="Bgee" id="ENSG00000116489">
    <property type="expression patterns" value="Expressed in epithelium of nasopharynx and 215 other cell types or tissues"/>
</dbReference>
<dbReference type="GO" id="GO:0015629">
    <property type="term" value="C:actin cytoskeleton"/>
    <property type="evidence" value="ECO:0000304"/>
    <property type="project" value="ProtInc"/>
</dbReference>
<dbReference type="GO" id="GO:0030863">
    <property type="term" value="C:cortical cytoskeleton"/>
    <property type="evidence" value="ECO:0000318"/>
    <property type="project" value="GO_Central"/>
</dbReference>
<dbReference type="GO" id="GO:0005856">
    <property type="term" value="C:cytoskeleton"/>
    <property type="evidence" value="ECO:0000304"/>
    <property type="project" value="UniProtKB"/>
</dbReference>
<dbReference type="GO" id="GO:0005829">
    <property type="term" value="C:cytosol"/>
    <property type="evidence" value="ECO:0000304"/>
    <property type="project" value="Reactome"/>
</dbReference>
<dbReference type="GO" id="GO:0070062">
    <property type="term" value="C:extracellular exosome"/>
    <property type="evidence" value="ECO:0007005"/>
    <property type="project" value="UniProtKB"/>
</dbReference>
<dbReference type="GO" id="GO:0005576">
    <property type="term" value="C:extracellular region"/>
    <property type="evidence" value="ECO:0000304"/>
    <property type="project" value="Reactome"/>
</dbReference>
<dbReference type="GO" id="GO:0008290">
    <property type="term" value="C:F-actin capping protein complex"/>
    <property type="evidence" value="ECO:0000318"/>
    <property type="project" value="GO_Central"/>
</dbReference>
<dbReference type="GO" id="GO:0071203">
    <property type="term" value="C:WASH complex"/>
    <property type="evidence" value="ECO:0000314"/>
    <property type="project" value="UniProtKB"/>
</dbReference>
<dbReference type="GO" id="GO:0003779">
    <property type="term" value="F:actin binding"/>
    <property type="evidence" value="ECO:0000304"/>
    <property type="project" value="ProtInc"/>
</dbReference>
<dbReference type="GO" id="GO:0051015">
    <property type="term" value="F:actin filament binding"/>
    <property type="evidence" value="ECO:0000318"/>
    <property type="project" value="GO_Central"/>
</dbReference>
<dbReference type="GO" id="GO:0045296">
    <property type="term" value="F:cadherin binding"/>
    <property type="evidence" value="ECO:0007005"/>
    <property type="project" value="BHF-UCL"/>
</dbReference>
<dbReference type="GO" id="GO:0030036">
    <property type="term" value="P:actin cytoskeleton organization"/>
    <property type="evidence" value="ECO:0000318"/>
    <property type="project" value="GO_Central"/>
</dbReference>
<dbReference type="GO" id="GO:0051016">
    <property type="term" value="P:barbed-end actin filament capping"/>
    <property type="evidence" value="ECO:0000318"/>
    <property type="project" value="GO_Central"/>
</dbReference>
<dbReference type="GO" id="GO:0034329">
    <property type="term" value="P:cell junction assembly"/>
    <property type="evidence" value="ECO:0000315"/>
    <property type="project" value="UniProtKB"/>
</dbReference>
<dbReference type="GO" id="GO:0065003">
    <property type="term" value="P:protein-containing complex assembly"/>
    <property type="evidence" value="ECO:0000304"/>
    <property type="project" value="ProtInc"/>
</dbReference>
<dbReference type="FunFam" id="3.30.1140.60:FF:000001">
    <property type="entry name" value="F-actin-capping protein subunit alpha"/>
    <property type="match status" value="1"/>
</dbReference>
<dbReference type="FunFam" id="3.90.1150.210:FF:000002">
    <property type="entry name" value="F-actin-capping protein subunit alpha"/>
    <property type="match status" value="1"/>
</dbReference>
<dbReference type="Gene3D" id="3.30.1140.60">
    <property type="entry name" value="F-actin capping protein, alpha subunit"/>
    <property type="match status" value="1"/>
</dbReference>
<dbReference type="Gene3D" id="3.90.1150.210">
    <property type="entry name" value="F-actin capping protein, beta subunit"/>
    <property type="match status" value="1"/>
</dbReference>
<dbReference type="IDEAL" id="IID00122"/>
<dbReference type="InterPro" id="IPR002189">
    <property type="entry name" value="CapZ_alpha"/>
</dbReference>
<dbReference type="InterPro" id="IPR037282">
    <property type="entry name" value="CapZ_alpha/beta"/>
</dbReference>
<dbReference type="InterPro" id="IPR042276">
    <property type="entry name" value="CapZ_alpha/beta_2"/>
</dbReference>
<dbReference type="InterPro" id="IPR042489">
    <property type="entry name" value="CapZ_alpha_1"/>
</dbReference>
<dbReference type="InterPro" id="IPR017865">
    <property type="entry name" value="F-actin_cap_asu_CS"/>
</dbReference>
<dbReference type="PANTHER" id="PTHR10653">
    <property type="entry name" value="F-ACTIN-CAPPING PROTEIN SUBUNIT ALPHA"/>
    <property type="match status" value="1"/>
</dbReference>
<dbReference type="PANTHER" id="PTHR10653:SF5">
    <property type="entry name" value="F-ACTIN-CAPPING PROTEIN SUBUNIT ALPHA-1"/>
    <property type="match status" value="1"/>
</dbReference>
<dbReference type="Pfam" id="PF01267">
    <property type="entry name" value="F-actin_cap_A"/>
    <property type="match status" value="1"/>
</dbReference>
<dbReference type="PRINTS" id="PR00191">
    <property type="entry name" value="FACTINCAPA"/>
</dbReference>
<dbReference type="SUPFAM" id="SSF90096">
    <property type="entry name" value="Subunits of heterodimeric actin filament capping protein Capz"/>
    <property type="match status" value="1"/>
</dbReference>
<dbReference type="PROSITE" id="PS00748">
    <property type="entry name" value="F_ACTIN_CAPPING_A_1"/>
    <property type="match status" value="1"/>
</dbReference>
<dbReference type="PROSITE" id="PS00749">
    <property type="entry name" value="F_ACTIN_CAPPING_A_2"/>
    <property type="match status" value="1"/>
</dbReference>
<keyword id="KW-0002">3D-structure</keyword>
<keyword id="KW-0007">Acetylation</keyword>
<keyword id="KW-0117">Actin capping</keyword>
<keyword id="KW-0009">Actin-binding</keyword>
<keyword id="KW-0963">Cytoplasm</keyword>
<keyword id="KW-0206">Cytoskeleton</keyword>
<keyword id="KW-0903">Direct protein sequencing</keyword>
<keyword id="KW-0597">Phosphoprotein</keyword>
<keyword id="KW-1267">Proteomics identification</keyword>
<keyword id="KW-1185">Reference proteome</keyword>
<evidence type="ECO:0000250" key="1"/>
<evidence type="ECO:0000250" key="2">
    <source>
        <dbReference type="UniProtKB" id="A0PFK5"/>
    </source>
</evidence>
<evidence type="ECO:0000269" key="3">
    <source>
    </source>
</evidence>
<evidence type="ECO:0000269" key="4">
    <source>
    </source>
</evidence>
<evidence type="ECO:0000269" key="5">
    <source>
    </source>
</evidence>
<evidence type="ECO:0000269" key="6">
    <source>
    </source>
</evidence>
<evidence type="ECO:0000269" key="7">
    <source>
    </source>
</evidence>
<evidence type="ECO:0000269" key="8">
    <source>
    </source>
</evidence>
<evidence type="ECO:0000269" key="9">
    <source ref="7"/>
</evidence>
<evidence type="ECO:0000305" key="10"/>
<evidence type="ECO:0000312" key="11">
    <source>
        <dbReference type="HGNC" id="HGNC:1488"/>
    </source>
</evidence>
<evidence type="ECO:0007744" key="12">
    <source>
    </source>
</evidence>
<evidence type="ECO:0007744" key="13">
    <source>
    </source>
</evidence>
<evidence type="ECO:0007744" key="14">
    <source>
    </source>
</evidence>
<evidence type="ECO:0007829" key="15">
    <source>
        <dbReference type="PDB" id="7T5Q"/>
    </source>
</evidence>
<evidence type="ECO:0007829" key="16">
    <source>
        <dbReference type="PDB" id="8F8Q"/>
    </source>
</evidence>
<sequence length="286" mass="32923">MADFDDRVSDEEKVRIAAKFITHAPPGEFNEVFNDVRLLLNNDNLLREGAAHAFAQYNMDQFTPVKIEGYEDQVLITEHGDLGNSRFLDPRNKISFKFDHLRKEASDPQPEEADGGLKSWRESCDSALRAYVKDHYSNGFCTVYAKTIDGQQTIIACIESHQFQPKNFWNGRWRSEWKFTITPPTAQVVGVLKIQVHYYEDGNVQLVSHKDVQDSLTVSNEAQTAKEFIKIIENAENEYQTAISENYQTMSDTTFKALRRQLPVTRTKIDWNKILSYKIGKEMQNA</sequence>
<proteinExistence type="evidence at protein level"/>
<name>CAZA1_HUMAN</name>
<protein>
    <recommendedName>
        <fullName>F-actin-capping protein subunit alpha-1</fullName>
    </recommendedName>
    <alternativeName>
        <fullName>CapZ alpha-1</fullName>
    </alternativeName>
</protein>
<organism>
    <name type="scientific">Homo sapiens</name>
    <name type="common">Human</name>
    <dbReference type="NCBI Taxonomy" id="9606"/>
    <lineage>
        <taxon>Eukaryota</taxon>
        <taxon>Metazoa</taxon>
        <taxon>Chordata</taxon>
        <taxon>Craniata</taxon>
        <taxon>Vertebrata</taxon>
        <taxon>Euteleostomi</taxon>
        <taxon>Mammalia</taxon>
        <taxon>Eutheria</taxon>
        <taxon>Euarchontoglires</taxon>
        <taxon>Primates</taxon>
        <taxon>Haplorrhini</taxon>
        <taxon>Catarrhini</taxon>
        <taxon>Hominidae</taxon>
        <taxon>Homo</taxon>
    </lineage>
</organism>
<feature type="initiator methionine" description="Removed" evidence="9 12">
    <location>
        <position position="1"/>
    </location>
</feature>
<feature type="chain" id="PRO_0000208624" description="F-actin-capping protein subunit alpha-1">
    <location>
        <begin position="2"/>
        <end position="286"/>
    </location>
</feature>
<feature type="modified residue" description="N-acetylalanine" evidence="9 12">
    <location>
        <position position="2"/>
    </location>
</feature>
<feature type="modified residue" description="Phosphoserine" evidence="14">
    <location>
        <position position="9"/>
    </location>
</feature>
<feature type="modified residue" description="N6-acetyllysine" evidence="13">
    <location>
        <position position="19"/>
    </location>
</feature>
<feature type="modified residue" description="N6-acetyllysine" evidence="13">
    <location>
        <position position="97"/>
    </location>
</feature>
<feature type="sequence variant" id="VAR_073834" description="In dbSNP:rs555597264." evidence="7">
    <original>S</original>
    <variation>L</variation>
    <location>
        <position position="219"/>
    </location>
</feature>
<feature type="sequence conflict" description="In Ref. 4; BAD96946." evidence="10" ref="4">
    <original>L</original>
    <variation>P</variation>
    <location>
        <position position="192"/>
    </location>
</feature>
<feature type="helix" evidence="16">
    <location>
        <begin position="10"/>
        <end position="22"/>
    </location>
</feature>
<feature type="helix" evidence="16">
    <location>
        <begin position="30"/>
        <end position="40"/>
    </location>
</feature>
<feature type="helix" evidence="16">
    <location>
        <begin position="43"/>
        <end position="47"/>
    </location>
</feature>
<feature type="strand" evidence="16">
    <location>
        <begin position="48"/>
        <end position="50"/>
    </location>
</feature>
<feature type="helix" evidence="16">
    <location>
        <begin position="52"/>
        <end position="61"/>
    </location>
</feature>
<feature type="strand" evidence="16">
    <location>
        <begin position="63"/>
        <end position="65"/>
    </location>
</feature>
<feature type="strand" evidence="16">
    <location>
        <begin position="68"/>
        <end position="72"/>
    </location>
</feature>
<feature type="strand" evidence="16">
    <location>
        <begin position="74"/>
        <end position="76"/>
    </location>
</feature>
<feature type="turn" evidence="15">
    <location>
        <begin position="78"/>
        <end position="80"/>
    </location>
</feature>
<feature type="strand" evidence="16">
    <location>
        <begin position="83"/>
        <end position="89"/>
    </location>
</feature>
<feature type="turn" evidence="16">
    <location>
        <begin position="90"/>
        <end position="93"/>
    </location>
</feature>
<feature type="strand" evidence="16">
    <location>
        <begin position="94"/>
        <end position="99"/>
    </location>
</feature>
<feature type="turn" evidence="16">
    <location>
        <begin position="100"/>
        <end position="103"/>
    </location>
</feature>
<feature type="strand" evidence="16">
    <location>
        <begin position="104"/>
        <end position="110"/>
    </location>
</feature>
<feature type="helix" evidence="16">
    <location>
        <begin position="119"/>
        <end position="135"/>
    </location>
</feature>
<feature type="strand" evidence="16">
    <location>
        <begin position="137"/>
        <end position="161"/>
    </location>
</feature>
<feature type="helix" evidence="16">
    <location>
        <begin position="165"/>
        <end position="167"/>
    </location>
</feature>
<feature type="strand" evidence="16">
    <location>
        <begin position="169"/>
        <end position="180"/>
    </location>
</feature>
<feature type="strand" evidence="16">
    <location>
        <begin position="183"/>
        <end position="198"/>
    </location>
</feature>
<feature type="strand" evidence="16">
    <location>
        <begin position="200"/>
        <end position="217"/>
    </location>
</feature>
<feature type="helix" evidence="16">
    <location>
        <begin position="221"/>
        <end position="248"/>
    </location>
</feature>
<feature type="helix" evidence="16">
    <location>
        <begin position="250"/>
        <end position="253"/>
    </location>
</feature>
<feature type="turn" evidence="16">
    <location>
        <begin position="256"/>
        <end position="258"/>
    </location>
</feature>
<feature type="helix" evidence="16">
    <location>
        <begin position="274"/>
        <end position="278"/>
    </location>
</feature>
<feature type="helix" evidence="16">
    <location>
        <begin position="279"/>
        <end position="281"/>
    </location>
</feature>
<accession>P52907</accession>
<accession>Q53FQ6</accession>
<accession>Q6FHD5</accession>
<comment type="function">
    <text evidence="2 6">F-actin-capping proteins bind in a Ca(2+)-independent manner to the fast growing ends of actin filaments (barbed end) thereby blocking the exchange of subunits at these ends. Unlike other capping proteins (such as gelsolin and severin), these proteins do not sever actin filaments. May play a role in the formation of epithelial cell junctions (PubMed:22891260). Forms, with CAPZB, the barbed end of the fast growing ends of actin filaments in the dynactin complex and stabilizes dynactin structure. The dynactin multiprotein complex activates the molecular motor dynein for ultra-processive transport along microtubules (By similarity).</text>
</comment>
<comment type="subunit">
    <text evidence="1 2 3 4 5 6 8">Component of the F-actin capping complex, composed of a heterodimer of an alpha and a beta subunit. Subunit of dynactin, a multiprotein complex part of a tripartite complex with dynein and a adapter, such as BICDL1, BICD2 or HOOK3. The dynactin complex is built around ACTR1A/ACTB filament and consists of an actin-related filament composed of a shoulder domain, a pointed end and a barbed end. Its length is defined by its flexible shoulder domain. The soulder is composed of 2 DCTN1 subunits, 4 DCTN2 and 2 DCTN3. The 4 DCNT2 (via N-terminus) bind the ACTR1A filament and act as molecular rulers to determine the length. The pointed end is important for binding dynein-dynactin cargo adapters. Consists of 4 subunits: ACTR10, DCNT4, DCTN5 and DCTN6. The barbed end is composed of a CAPZA1:CAPZB heterodimers, which binds ACTR1A/ACTB filament and dynactin and stabilizes dynactin (By similarity). Component of the WASH complex, composed of F-actin-capping protein subunit alpha (CAPZA1, CAPZA2 or CAPZA3), F-actin-capping protein subunit beta (CAPZB), WASH (WASHC1, WASH2P, WASH3P, WASH4P, WASH5P or WASH6P), WASHC2 (WASHC2A or WASHC2C), WASHC3, WASHC4 and WASHC5. Interacts with S100A (By similarity). Interacts with S100B. Interacts with SH3BP1; recruits CAPZA1 to forming cell junctions (PubMed:22891260). Interacts with CD2AP (PubMed:22891260). Directly interacts with CRACD; this interaction decreases binding to actin (PubMed:30361697).</text>
</comment>
<comment type="interaction">
    <interactant intactId="EBI-355586">
        <id>P52907</id>
    </interactant>
    <interactant intactId="EBI-353595">
        <id>P47756</id>
        <label>CAPZB</label>
    </interactant>
    <organismsDiffer>false</organismsDiffer>
    <experiments>4</experiments>
</comment>
<comment type="interaction">
    <interactant intactId="EBI-355586">
        <id>P52907</id>
    </interactant>
    <interactant intactId="EBI-743686">
        <id>P23297</id>
        <label>S100A1</label>
    </interactant>
    <organismsDiffer>false</organismsDiffer>
    <experiments>2</experiments>
</comment>
<comment type="interaction">
    <interactant intactId="EBI-355586">
        <id>P52907</id>
    </interactant>
    <interactant intactId="EBI-7211732">
        <id>P33763</id>
        <label>S100A5</label>
    </interactant>
    <organismsDiffer>false</organismsDiffer>
    <experiments>2</experiments>
</comment>
<comment type="interaction">
    <interactant intactId="EBI-355586">
        <id>P52907</id>
    </interactant>
    <interactant intactId="EBI-458391">
        <id>P04271</id>
        <label>S100B</label>
    </interactant>
    <organismsDiffer>false</organismsDiffer>
    <experiments>3</experiments>
</comment>
<comment type="interaction">
    <interactant intactId="EBI-355586">
        <id>P52907</id>
    </interactant>
    <interactant intactId="EBI-743700">
        <id>P25815</id>
        <label>S100P</label>
    </interactant>
    <organismsDiffer>false</organismsDiffer>
    <experiments>2</experiments>
</comment>
<comment type="interaction">
    <interactant intactId="EBI-355586">
        <id>P52907</id>
    </interactant>
    <interactant intactId="EBI-346595">
        <id>Q96B97</id>
        <label>SH3KBP1</label>
    </interactant>
    <organismsDiffer>false</organismsDiffer>
    <experiments>7</experiments>
</comment>
<comment type="subcellular location">
    <subcellularLocation>
        <location evidence="2">Cytoplasm</location>
        <location evidence="2">Cytoskeleton</location>
    </subcellularLocation>
</comment>
<comment type="similarity">
    <text evidence="10">Belongs to the F-actin-capping protein alpha subunit family.</text>
</comment>